<gene>
    <name evidence="1" type="primary">rpsJ</name>
    <name type="ordered locus">CMM_2618</name>
</gene>
<organism>
    <name type="scientific">Clavibacter michiganensis subsp. michiganensis (strain NCPPB 382)</name>
    <dbReference type="NCBI Taxonomy" id="443906"/>
    <lineage>
        <taxon>Bacteria</taxon>
        <taxon>Bacillati</taxon>
        <taxon>Actinomycetota</taxon>
        <taxon>Actinomycetes</taxon>
        <taxon>Micrococcales</taxon>
        <taxon>Microbacteriaceae</taxon>
        <taxon>Clavibacter</taxon>
    </lineage>
</organism>
<comment type="function">
    <text evidence="1">Involved in the binding of tRNA to the ribosomes.</text>
</comment>
<comment type="subunit">
    <text evidence="1">Part of the 30S ribosomal subunit.</text>
</comment>
<comment type="similarity">
    <text evidence="1">Belongs to the universal ribosomal protein uS10 family.</text>
</comment>
<accession>A5CUB4</accession>
<proteinExistence type="inferred from homology"/>
<protein>
    <recommendedName>
        <fullName evidence="1">Small ribosomal subunit protein uS10</fullName>
    </recommendedName>
    <alternativeName>
        <fullName evidence="2">30S ribosomal protein S10</fullName>
    </alternativeName>
</protein>
<keyword id="KW-0687">Ribonucleoprotein</keyword>
<keyword id="KW-0689">Ribosomal protein</keyword>
<feature type="chain" id="PRO_1000015010" description="Small ribosomal subunit protein uS10">
    <location>
        <begin position="1"/>
        <end position="102"/>
    </location>
</feature>
<dbReference type="EMBL" id="AM711867">
    <property type="protein sequence ID" value="CAN02701.1"/>
    <property type="molecule type" value="Genomic_DNA"/>
</dbReference>
<dbReference type="RefSeq" id="WP_012039307.1">
    <property type="nucleotide sequence ID" value="NC_009480.1"/>
</dbReference>
<dbReference type="SMR" id="A5CUB4"/>
<dbReference type="GeneID" id="92984330"/>
<dbReference type="KEGG" id="cmi:CMM_2618"/>
<dbReference type="eggNOG" id="COG0051">
    <property type="taxonomic scope" value="Bacteria"/>
</dbReference>
<dbReference type="HOGENOM" id="CLU_122625_1_3_11"/>
<dbReference type="OrthoDB" id="9804464at2"/>
<dbReference type="Proteomes" id="UP000001564">
    <property type="component" value="Chromosome"/>
</dbReference>
<dbReference type="GO" id="GO:1990904">
    <property type="term" value="C:ribonucleoprotein complex"/>
    <property type="evidence" value="ECO:0007669"/>
    <property type="project" value="UniProtKB-KW"/>
</dbReference>
<dbReference type="GO" id="GO:0005840">
    <property type="term" value="C:ribosome"/>
    <property type="evidence" value="ECO:0007669"/>
    <property type="project" value="UniProtKB-KW"/>
</dbReference>
<dbReference type="GO" id="GO:0003735">
    <property type="term" value="F:structural constituent of ribosome"/>
    <property type="evidence" value="ECO:0007669"/>
    <property type="project" value="InterPro"/>
</dbReference>
<dbReference type="GO" id="GO:0000049">
    <property type="term" value="F:tRNA binding"/>
    <property type="evidence" value="ECO:0007669"/>
    <property type="project" value="UniProtKB-UniRule"/>
</dbReference>
<dbReference type="GO" id="GO:0006412">
    <property type="term" value="P:translation"/>
    <property type="evidence" value="ECO:0007669"/>
    <property type="project" value="UniProtKB-UniRule"/>
</dbReference>
<dbReference type="FunFam" id="3.30.70.600:FF:000001">
    <property type="entry name" value="30S ribosomal protein S10"/>
    <property type="match status" value="1"/>
</dbReference>
<dbReference type="Gene3D" id="3.30.70.600">
    <property type="entry name" value="Ribosomal protein S10 domain"/>
    <property type="match status" value="1"/>
</dbReference>
<dbReference type="HAMAP" id="MF_00508">
    <property type="entry name" value="Ribosomal_uS10"/>
    <property type="match status" value="1"/>
</dbReference>
<dbReference type="InterPro" id="IPR001848">
    <property type="entry name" value="Ribosomal_uS10"/>
</dbReference>
<dbReference type="InterPro" id="IPR018268">
    <property type="entry name" value="Ribosomal_uS10_CS"/>
</dbReference>
<dbReference type="InterPro" id="IPR027486">
    <property type="entry name" value="Ribosomal_uS10_dom"/>
</dbReference>
<dbReference type="InterPro" id="IPR036838">
    <property type="entry name" value="Ribosomal_uS10_dom_sf"/>
</dbReference>
<dbReference type="NCBIfam" id="NF001861">
    <property type="entry name" value="PRK00596.1"/>
    <property type="match status" value="1"/>
</dbReference>
<dbReference type="NCBIfam" id="TIGR01049">
    <property type="entry name" value="rpsJ_bact"/>
    <property type="match status" value="1"/>
</dbReference>
<dbReference type="PANTHER" id="PTHR11700">
    <property type="entry name" value="30S RIBOSOMAL PROTEIN S10 FAMILY MEMBER"/>
    <property type="match status" value="1"/>
</dbReference>
<dbReference type="Pfam" id="PF00338">
    <property type="entry name" value="Ribosomal_S10"/>
    <property type="match status" value="1"/>
</dbReference>
<dbReference type="PRINTS" id="PR00971">
    <property type="entry name" value="RIBOSOMALS10"/>
</dbReference>
<dbReference type="SMART" id="SM01403">
    <property type="entry name" value="Ribosomal_S10"/>
    <property type="match status" value="1"/>
</dbReference>
<dbReference type="SUPFAM" id="SSF54999">
    <property type="entry name" value="Ribosomal protein S10"/>
    <property type="match status" value="1"/>
</dbReference>
<dbReference type="PROSITE" id="PS00361">
    <property type="entry name" value="RIBOSOMAL_S10"/>
    <property type="match status" value="1"/>
</dbReference>
<sequence length="102" mass="11512">MAGQKIRIRLKSYDHSVIDSSARKIVDTVTRAGATVVGPVPLPTEKNVICVIRSPHKYKDSREHFEMRTHKRLIDIVDPTPKAVDSLMRLDLPADVNIEIKL</sequence>
<evidence type="ECO:0000255" key="1">
    <source>
        <dbReference type="HAMAP-Rule" id="MF_00508"/>
    </source>
</evidence>
<evidence type="ECO:0000305" key="2"/>
<name>RS10_CLAM3</name>
<reference key="1">
    <citation type="journal article" date="2008" name="J. Bacteriol.">
        <title>The genome sequence of the tomato-pathogenic actinomycete Clavibacter michiganensis subsp. michiganensis NCPPB382 reveals a large island involved in pathogenicity.</title>
        <authorList>
            <person name="Gartemann K.-H."/>
            <person name="Abt B."/>
            <person name="Bekel T."/>
            <person name="Burger A."/>
            <person name="Engemann J."/>
            <person name="Fluegel M."/>
            <person name="Gaigalat L."/>
            <person name="Goesmann A."/>
            <person name="Graefen I."/>
            <person name="Kalinowski J."/>
            <person name="Kaup O."/>
            <person name="Kirchner O."/>
            <person name="Krause L."/>
            <person name="Linke B."/>
            <person name="McHardy A."/>
            <person name="Meyer F."/>
            <person name="Pohle S."/>
            <person name="Rueckert C."/>
            <person name="Schneiker S."/>
            <person name="Zellermann E.-M."/>
            <person name="Puehler A."/>
            <person name="Eichenlaub R."/>
            <person name="Kaiser O."/>
            <person name="Bartels D."/>
        </authorList>
    </citation>
    <scope>NUCLEOTIDE SEQUENCE [LARGE SCALE GENOMIC DNA]</scope>
    <source>
        <strain>NCPPB 382</strain>
    </source>
</reference>